<comment type="similarity">
    <text evidence="1">Belongs to the bacterial ribosomal protein bL28 family.</text>
</comment>
<comment type="sequence caution" evidence="3">
    <conflict type="erroneous initiation">
        <sequence resource="EMBL-CDS" id="AAT27901"/>
    </conflict>
</comment>
<dbReference type="EMBL" id="AE017308">
    <property type="protein sequence ID" value="AAT27901.1"/>
    <property type="status" value="ALT_INIT"/>
    <property type="molecule type" value="Genomic_DNA"/>
</dbReference>
<dbReference type="RefSeq" id="WP_011264935.1">
    <property type="nucleotide sequence ID" value="NC_006908.1"/>
</dbReference>
<dbReference type="SMR" id="Q6KHM9"/>
<dbReference type="STRING" id="267748.MMOB4150"/>
<dbReference type="KEGG" id="mmo:MMOB4150"/>
<dbReference type="eggNOG" id="COG0227">
    <property type="taxonomic scope" value="Bacteria"/>
</dbReference>
<dbReference type="HOGENOM" id="CLU_064548_7_2_14"/>
<dbReference type="OrthoDB" id="9805609at2"/>
<dbReference type="Proteomes" id="UP000009072">
    <property type="component" value="Chromosome"/>
</dbReference>
<dbReference type="GO" id="GO:1990904">
    <property type="term" value="C:ribonucleoprotein complex"/>
    <property type="evidence" value="ECO:0007669"/>
    <property type="project" value="UniProtKB-KW"/>
</dbReference>
<dbReference type="GO" id="GO:0005840">
    <property type="term" value="C:ribosome"/>
    <property type="evidence" value="ECO:0007669"/>
    <property type="project" value="UniProtKB-KW"/>
</dbReference>
<dbReference type="GO" id="GO:0003735">
    <property type="term" value="F:structural constituent of ribosome"/>
    <property type="evidence" value="ECO:0007669"/>
    <property type="project" value="InterPro"/>
</dbReference>
<dbReference type="GO" id="GO:0006412">
    <property type="term" value="P:translation"/>
    <property type="evidence" value="ECO:0007669"/>
    <property type="project" value="UniProtKB-UniRule"/>
</dbReference>
<dbReference type="Gene3D" id="2.30.170.40">
    <property type="entry name" value="Ribosomal protein L28/L24"/>
    <property type="match status" value="1"/>
</dbReference>
<dbReference type="HAMAP" id="MF_00373">
    <property type="entry name" value="Ribosomal_bL28"/>
    <property type="match status" value="1"/>
</dbReference>
<dbReference type="InterPro" id="IPR050096">
    <property type="entry name" value="Bacterial_rp_bL28"/>
</dbReference>
<dbReference type="InterPro" id="IPR026569">
    <property type="entry name" value="Ribosomal_bL28"/>
</dbReference>
<dbReference type="InterPro" id="IPR034704">
    <property type="entry name" value="Ribosomal_bL28/bL31-like_sf"/>
</dbReference>
<dbReference type="InterPro" id="IPR001383">
    <property type="entry name" value="Ribosomal_bL28_bact-type"/>
</dbReference>
<dbReference type="InterPro" id="IPR037147">
    <property type="entry name" value="Ribosomal_bL28_sf"/>
</dbReference>
<dbReference type="NCBIfam" id="TIGR00009">
    <property type="entry name" value="L28"/>
    <property type="match status" value="1"/>
</dbReference>
<dbReference type="PANTHER" id="PTHR39080">
    <property type="entry name" value="50S RIBOSOMAL PROTEIN L28"/>
    <property type="match status" value="1"/>
</dbReference>
<dbReference type="PANTHER" id="PTHR39080:SF1">
    <property type="entry name" value="LARGE RIBOSOMAL SUBUNIT PROTEIN BL28A"/>
    <property type="match status" value="1"/>
</dbReference>
<dbReference type="Pfam" id="PF00830">
    <property type="entry name" value="Ribosomal_L28"/>
    <property type="match status" value="1"/>
</dbReference>
<dbReference type="SUPFAM" id="SSF143800">
    <property type="entry name" value="L28p-like"/>
    <property type="match status" value="1"/>
</dbReference>
<feature type="chain" id="PRO_0000178507" description="Large ribosomal subunit protein bL28">
    <location>
        <begin position="1"/>
        <end position="65"/>
    </location>
</feature>
<feature type="region of interest" description="Disordered" evidence="2">
    <location>
        <begin position="1"/>
        <end position="26"/>
    </location>
</feature>
<feature type="compositionally biased region" description="Basic residues" evidence="2">
    <location>
        <begin position="17"/>
        <end position="26"/>
    </location>
</feature>
<sequence length="65" mass="7196">MARRDDLTNKGPMSGNKRSHALNATKRKFNLNLQKILVTLENGSKVKIKVSAKTAKTLKKQGFVA</sequence>
<gene>
    <name evidence="1" type="primary">rpmB</name>
    <name type="ordered locus">MMOB4150</name>
</gene>
<name>RL28_MYCM1</name>
<accession>Q6KHM9</accession>
<reference key="1">
    <citation type="journal article" date="2004" name="Genome Res.">
        <title>The complete genome and proteome of Mycoplasma mobile.</title>
        <authorList>
            <person name="Jaffe J.D."/>
            <person name="Stange-Thomann N."/>
            <person name="Smith C."/>
            <person name="DeCaprio D."/>
            <person name="Fisher S."/>
            <person name="Butler J."/>
            <person name="Calvo S."/>
            <person name="Elkins T."/>
            <person name="FitzGerald M.G."/>
            <person name="Hafez N."/>
            <person name="Kodira C.D."/>
            <person name="Major J."/>
            <person name="Wang S."/>
            <person name="Wilkinson J."/>
            <person name="Nicol R."/>
            <person name="Nusbaum C."/>
            <person name="Birren B."/>
            <person name="Berg H.C."/>
            <person name="Church G.M."/>
        </authorList>
    </citation>
    <scope>NUCLEOTIDE SEQUENCE [LARGE SCALE GENOMIC DNA]</scope>
    <source>
        <strain>ATCC 43663 / NCTC 11711 / 163 K</strain>
    </source>
</reference>
<proteinExistence type="inferred from homology"/>
<organism>
    <name type="scientific">Mycoplasma mobile (strain ATCC 43663 / 163K / NCTC 11711)</name>
    <name type="common">Mesomycoplasma mobile</name>
    <dbReference type="NCBI Taxonomy" id="267748"/>
    <lineage>
        <taxon>Bacteria</taxon>
        <taxon>Bacillati</taxon>
        <taxon>Mycoplasmatota</taxon>
        <taxon>Mycoplasmoidales</taxon>
        <taxon>Metamycoplasmataceae</taxon>
        <taxon>Mesomycoplasma</taxon>
    </lineage>
</organism>
<keyword id="KW-1185">Reference proteome</keyword>
<keyword id="KW-0687">Ribonucleoprotein</keyword>
<keyword id="KW-0689">Ribosomal protein</keyword>
<protein>
    <recommendedName>
        <fullName evidence="1">Large ribosomal subunit protein bL28</fullName>
    </recommendedName>
    <alternativeName>
        <fullName evidence="3">50S ribosomal protein L28</fullName>
    </alternativeName>
</protein>
<evidence type="ECO:0000255" key="1">
    <source>
        <dbReference type="HAMAP-Rule" id="MF_00373"/>
    </source>
</evidence>
<evidence type="ECO:0000256" key="2">
    <source>
        <dbReference type="SAM" id="MobiDB-lite"/>
    </source>
</evidence>
<evidence type="ECO:0000305" key="3"/>